<gene>
    <name evidence="1" type="primary">acpP</name>
    <name type="ordered locus">SAS1166</name>
</gene>
<accession>Q6G9Y1</accession>
<reference key="1">
    <citation type="journal article" date="2004" name="Proc. Natl. Acad. Sci. U.S.A.">
        <title>Complete genomes of two clinical Staphylococcus aureus strains: evidence for the rapid evolution of virulence and drug resistance.</title>
        <authorList>
            <person name="Holden M.T.G."/>
            <person name="Feil E.J."/>
            <person name="Lindsay J.A."/>
            <person name="Peacock S.J."/>
            <person name="Day N.P.J."/>
            <person name="Enright M.C."/>
            <person name="Foster T.J."/>
            <person name="Moore C.E."/>
            <person name="Hurst L."/>
            <person name="Atkin R."/>
            <person name="Barron A."/>
            <person name="Bason N."/>
            <person name="Bentley S.D."/>
            <person name="Chillingworth C."/>
            <person name="Chillingworth T."/>
            <person name="Churcher C."/>
            <person name="Clark L."/>
            <person name="Corton C."/>
            <person name="Cronin A."/>
            <person name="Doggett J."/>
            <person name="Dowd L."/>
            <person name="Feltwell T."/>
            <person name="Hance Z."/>
            <person name="Harris B."/>
            <person name="Hauser H."/>
            <person name="Holroyd S."/>
            <person name="Jagels K."/>
            <person name="James K.D."/>
            <person name="Lennard N."/>
            <person name="Line A."/>
            <person name="Mayes R."/>
            <person name="Moule S."/>
            <person name="Mungall K."/>
            <person name="Ormond D."/>
            <person name="Quail M.A."/>
            <person name="Rabbinowitsch E."/>
            <person name="Rutherford K.M."/>
            <person name="Sanders M."/>
            <person name="Sharp S."/>
            <person name="Simmonds M."/>
            <person name="Stevens K."/>
            <person name="Whitehead S."/>
            <person name="Barrell B.G."/>
            <person name="Spratt B.G."/>
            <person name="Parkhill J."/>
        </authorList>
    </citation>
    <scope>NUCLEOTIDE SEQUENCE [LARGE SCALE GENOMIC DNA]</scope>
    <source>
        <strain>MSSA476</strain>
    </source>
</reference>
<dbReference type="EMBL" id="BX571857">
    <property type="protein sequence ID" value="CAG42943.1"/>
    <property type="molecule type" value="Genomic_DNA"/>
</dbReference>
<dbReference type="RefSeq" id="WP_000426914.1">
    <property type="nucleotide sequence ID" value="NC_002953.3"/>
</dbReference>
<dbReference type="SMR" id="Q6G9Y1"/>
<dbReference type="KEGG" id="sas:SAS1166"/>
<dbReference type="HOGENOM" id="CLU_108696_5_1_9"/>
<dbReference type="UniPathway" id="UPA00094"/>
<dbReference type="GO" id="GO:0005829">
    <property type="term" value="C:cytosol"/>
    <property type="evidence" value="ECO:0007669"/>
    <property type="project" value="TreeGrafter"/>
</dbReference>
<dbReference type="GO" id="GO:0016020">
    <property type="term" value="C:membrane"/>
    <property type="evidence" value="ECO:0007669"/>
    <property type="project" value="GOC"/>
</dbReference>
<dbReference type="GO" id="GO:0000035">
    <property type="term" value="F:acyl binding"/>
    <property type="evidence" value="ECO:0007669"/>
    <property type="project" value="TreeGrafter"/>
</dbReference>
<dbReference type="GO" id="GO:0000036">
    <property type="term" value="F:acyl carrier activity"/>
    <property type="evidence" value="ECO:0007669"/>
    <property type="project" value="UniProtKB-UniRule"/>
</dbReference>
<dbReference type="GO" id="GO:0009245">
    <property type="term" value="P:lipid A biosynthetic process"/>
    <property type="evidence" value="ECO:0007669"/>
    <property type="project" value="TreeGrafter"/>
</dbReference>
<dbReference type="FunFam" id="1.10.1200.10:FF:000001">
    <property type="entry name" value="Acyl carrier protein"/>
    <property type="match status" value="1"/>
</dbReference>
<dbReference type="Gene3D" id="1.10.1200.10">
    <property type="entry name" value="ACP-like"/>
    <property type="match status" value="1"/>
</dbReference>
<dbReference type="HAMAP" id="MF_01217">
    <property type="entry name" value="Acyl_carrier"/>
    <property type="match status" value="1"/>
</dbReference>
<dbReference type="InterPro" id="IPR003231">
    <property type="entry name" value="ACP"/>
</dbReference>
<dbReference type="InterPro" id="IPR036736">
    <property type="entry name" value="ACP-like_sf"/>
</dbReference>
<dbReference type="InterPro" id="IPR009081">
    <property type="entry name" value="PP-bd_ACP"/>
</dbReference>
<dbReference type="InterPro" id="IPR006162">
    <property type="entry name" value="Ppantetheine_attach_site"/>
</dbReference>
<dbReference type="NCBIfam" id="TIGR00517">
    <property type="entry name" value="acyl_carrier"/>
    <property type="match status" value="1"/>
</dbReference>
<dbReference type="NCBIfam" id="NF002148">
    <property type="entry name" value="PRK00982.1-2"/>
    <property type="match status" value="1"/>
</dbReference>
<dbReference type="NCBIfam" id="NF002150">
    <property type="entry name" value="PRK00982.1-4"/>
    <property type="match status" value="1"/>
</dbReference>
<dbReference type="NCBIfam" id="NF002151">
    <property type="entry name" value="PRK00982.1-5"/>
    <property type="match status" value="1"/>
</dbReference>
<dbReference type="PANTHER" id="PTHR20863">
    <property type="entry name" value="ACYL CARRIER PROTEIN"/>
    <property type="match status" value="1"/>
</dbReference>
<dbReference type="PANTHER" id="PTHR20863:SF76">
    <property type="entry name" value="CARRIER DOMAIN-CONTAINING PROTEIN"/>
    <property type="match status" value="1"/>
</dbReference>
<dbReference type="Pfam" id="PF00550">
    <property type="entry name" value="PP-binding"/>
    <property type="match status" value="1"/>
</dbReference>
<dbReference type="SUPFAM" id="SSF47336">
    <property type="entry name" value="ACP-like"/>
    <property type="match status" value="1"/>
</dbReference>
<dbReference type="PROSITE" id="PS50075">
    <property type="entry name" value="CARRIER"/>
    <property type="match status" value="1"/>
</dbReference>
<dbReference type="PROSITE" id="PS00012">
    <property type="entry name" value="PHOSPHOPANTETHEINE"/>
    <property type="match status" value="1"/>
</dbReference>
<protein>
    <recommendedName>
        <fullName evidence="1">Acyl carrier protein</fullName>
        <shortName evidence="1">ACP</shortName>
    </recommendedName>
</protein>
<evidence type="ECO:0000255" key="1">
    <source>
        <dbReference type="HAMAP-Rule" id="MF_01217"/>
    </source>
</evidence>
<evidence type="ECO:0000255" key="2">
    <source>
        <dbReference type="PROSITE-ProRule" id="PRU00258"/>
    </source>
</evidence>
<name>ACP_STAAS</name>
<organism>
    <name type="scientific">Staphylococcus aureus (strain MSSA476)</name>
    <dbReference type="NCBI Taxonomy" id="282459"/>
    <lineage>
        <taxon>Bacteria</taxon>
        <taxon>Bacillati</taxon>
        <taxon>Bacillota</taxon>
        <taxon>Bacilli</taxon>
        <taxon>Bacillales</taxon>
        <taxon>Staphylococcaceae</taxon>
        <taxon>Staphylococcus</taxon>
    </lineage>
</organism>
<proteinExistence type="inferred from homology"/>
<keyword id="KW-0963">Cytoplasm</keyword>
<keyword id="KW-0275">Fatty acid biosynthesis</keyword>
<keyword id="KW-0276">Fatty acid metabolism</keyword>
<keyword id="KW-0444">Lipid biosynthesis</keyword>
<keyword id="KW-0443">Lipid metabolism</keyword>
<keyword id="KW-0596">Phosphopantetheine</keyword>
<keyword id="KW-0597">Phosphoprotein</keyword>
<sequence length="77" mass="8549">MENFDKVKDIIVDRLGVDADKVTEDASFKDDLGADSLDIAELVMELEDEFGTEIPDEEAEKINTVGDAVKFINSLEK</sequence>
<feature type="chain" id="PRO_0000180192" description="Acyl carrier protein">
    <location>
        <begin position="1"/>
        <end position="77"/>
    </location>
</feature>
<feature type="domain" description="Carrier" evidence="2">
    <location>
        <begin position="1"/>
        <end position="76"/>
    </location>
</feature>
<feature type="modified residue" description="O-(pantetheine 4'-phosphoryl)serine" evidence="2">
    <location>
        <position position="36"/>
    </location>
</feature>
<comment type="function">
    <text evidence="1">Carrier of the growing fatty acid chain in fatty acid biosynthesis.</text>
</comment>
<comment type="pathway">
    <text evidence="1">Lipid metabolism; fatty acid biosynthesis.</text>
</comment>
<comment type="subcellular location">
    <subcellularLocation>
        <location evidence="1">Cytoplasm</location>
    </subcellularLocation>
</comment>
<comment type="PTM">
    <text evidence="1">4'-phosphopantetheine is transferred from CoA to a specific serine of apo-ACP by AcpS. This modification is essential for activity because fatty acids are bound in thioester linkage to the sulfhydryl of the prosthetic group.</text>
</comment>
<comment type="similarity">
    <text evidence="1">Belongs to the acyl carrier protein (ACP) family.</text>
</comment>